<sequence length="240" mass="27000">MSSEELACKLQRRLRLEVRAETDQGDPQPAPCDAPAGHPEPEPPARAPTASADSELNLKLSRRLDIHQGTARPGRSKVFNPYTEFPEFSRRLLKDLEKMFKTYDAGRDGFIDLMELKLMMEKLGAPQTHLGLKSMIKEVDEDFDGKLSFREFLLIFHKAAAGELQEDSGLLALAKFSEIDVALEGVRGAKNFFEAKAQALSCSSKFEAELKAEQEERKREEEARRLRQAAFRELKAAFSA</sequence>
<keyword id="KW-0002">3D-structure</keyword>
<keyword id="KW-0106">Calcium</keyword>
<keyword id="KW-0472">Membrane</keyword>
<keyword id="KW-0479">Metal-binding</keyword>
<keyword id="KW-0496">Mitochondrion</keyword>
<keyword id="KW-0999">Mitochondrion inner membrane</keyword>
<keyword id="KW-1185">Reference proteome</keyword>
<keyword id="KW-0677">Repeat</keyword>
<gene>
    <name type="primary">Efhd1</name>
    <name type="synonym">Sws2</name>
</gene>
<comment type="function">
    <text evidence="1 5">Acts as a calcium sensor for mitochondrial flash (mitoflash) activation, an event characterized by stochastic bursts of superoxide production (By similarity). May play a role in neuronal differentiation (PubMed:16336229).</text>
</comment>
<comment type="subcellular location">
    <subcellularLocation>
        <location evidence="5">Mitochondrion inner membrane</location>
    </subcellularLocation>
</comment>
<comment type="tissue specificity">
    <text evidence="4 5">Widely expressed (PubMed:16336229). Highest expression in testis, followed by ovary, kidney, cerebrum, cerebellum, heart, liver, and spleen (PubMed:12270117). In the cerebrum and cerebellum, undetectable at embryonic stages, expression increases after birth up to adult stage (PubMed:12270117). In adult CNS, detected in neurons of the cerebellum, cerebrum and hippocampus formation, including dentate gyrus and Cornu Ammonis, but not in the white matter (PubMed:12270117). In the testis, expressed in spermatocytes, but not in spermatogonia nor in interstitial cells (PubMed:12270117). In ovary, found predominantly in mural granulosa cells and those of the cumulus oophorus (PubMed:12270117). In kidney, expressed in collecting ducts, but not in glomeruli (PubMed:12270117). Not detected in skeletal muscle (PubMed:12270117).</text>
</comment>
<comment type="developmental stage">
    <text evidence="4">In the cerebral cortex, at birth, confined in the Purkinje cell layer (PCL) and in cerebellar nuclei. Not detected in the external germinal layer (EGL). At P5 and P10, predominantly found in the PCL and internal germinal layer (IGL). Not detected in the EGL. At P10 and P20, up-regulated. At P20, expression similar to that of the adult cerebellum.</text>
</comment>
<protein>
    <recommendedName>
        <fullName>EF-hand domain-containing protein D1</fullName>
    </recommendedName>
    <alternativeName>
        <fullName>EF-hand domain-containing protein 1</fullName>
    </alternativeName>
    <alternativeName>
        <fullName evidence="6">Mitocalcin</fullName>
    </alternativeName>
    <alternativeName>
        <fullName>Swiprosin-2</fullName>
    </alternativeName>
</protein>
<organism>
    <name type="scientific">Mus musculus</name>
    <name type="common">Mouse</name>
    <dbReference type="NCBI Taxonomy" id="10090"/>
    <lineage>
        <taxon>Eukaryota</taxon>
        <taxon>Metazoa</taxon>
        <taxon>Chordata</taxon>
        <taxon>Craniata</taxon>
        <taxon>Vertebrata</taxon>
        <taxon>Euteleostomi</taxon>
        <taxon>Mammalia</taxon>
        <taxon>Eutheria</taxon>
        <taxon>Euarchontoglires</taxon>
        <taxon>Glires</taxon>
        <taxon>Rodentia</taxon>
        <taxon>Myomorpha</taxon>
        <taxon>Muroidea</taxon>
        <taxon>Muridae</taxon>
        <taxon>Murinae</taxon>
        <taxon>Mus</taxon>
        <taxon>Mus</taxon>
    </lineage>
</organism>
<accession>Q9D4J1</accession>
<accession>Q543U4</accession>
<dbReference type="EMBL" id="AK016491">
    <property type="protein sequence ID" value="BAB30268.1"/>
    <property type="molecule type" value="mRNA"/>
</dbReference>
<dbReference type="EMBL" id="AK045911">
    <property type="protein sequence ID" value="BAC32529.1"/>
    <property type="molecule type" value="mRNA"/>
</dbReference>
<dbReference type="EMBL" id="AK144175">
    <property type="protein sequence ID" value="BAE25747.1"/>
    <property type="molecule type" value="mRNA"/>
</dbReference>
<dbReference type="EMBL" id="AK171846">
    <property type="protein sequence ID" value="BAE42694.1"/>
    <property type="molecule type" value="mRNA"/>
</dbReference>
<dbReference type="EMBL" id="BC019531">
    <property type="protein sequence ID" value="AAH19531.1"/>
    <property type="molecule type" value="mRNA"/>
</dbReference>
<dbReference type="EMBL" id="BC085088">
    <property type="protein sequence ID" value="AAH85088.1"/>
    <property type="molecule type" value="mRNA"/>
</dbReference>
<dbReference type="CCDS" id="CCDS15132.1"/>
<dbReference type="RefSeq" id="NP_083165.1">
    <property type="nucleotide sequence ID" value="NM_028889.3"/>
</dbReference>
<dbReference type="PDB" id="7CLT">
    <property type="method" value="X-ray"/>
    <property type="resolution" value="2.07 A"/>
    <property type="chains" value="A=69-199"/>
</dbReference>
<dbReference type="PDB" id="7YGV">
    <property type="method" value="X-ray"/>
    <property type="resolution" value="2.80 A"/>
    <property type="chains" value="A=69-193"/>
</dbReference>
<dbReference type="PDB" id="7YGW">
    <property type="method" value="X-ray"/>
    <property type="resolution" value="1.72 A"/>
    <property type="chains" value="A=69-193"/>
</dbReference>
<dbReference type="PDBsum" id="7CLT"/>
<dbReference type="PDBsum" id="7YGV"/>
<dbReference type="PDBsum" id="7YGW"/>
<dbReference type="SMR" id="Q9D4J1"/>
<dbReference type="BioGRID" id="221041">
    <property type="interactions" value="1"/>
</dbReference>
<dbReference type="FunCoup" id="Q9D4J1">
    <property type="interactions" value="313"/>
</dbReference>
<dbReference type="STRING" id="10090.ENSMUSP00000027472"/>
<dbReference type="GlyGen" id="Q9D4J1">
    <property type="glycosylation" value="1 site, 1 O-linked glycan (1 site)"/>
</dbReference>
<dbReference type="iPTMnet" id="Q9D4J1"/>
<dbReference type="PhosphoSitePlus" id="Q9D4J1"/>
<dbReference type="SwissPalm" id="Q9D4J1"/>
<dbReference type="jPOST" id="Q9D4J1"/>
<dbReference type="PaxDb" id="10090-ENSMUSP00000027472"/>
<dbReference type="PeptideAtlas" id="Q9D4J1"/>
<dbReference type="ProteomicsDB" id="275440"/>
<dbReference type="Antibodypedia" id="34436">
    <property type="antibodies" value="301 antibodies from 30 providers"/>
</dbReference>
<dbReference type="DNASU" id="98363"/>
<dbReference type="Ensembl" id="ENSMUST00000027472.7">
    <property type="protein sequence ID" value="ENSMUSP00000027472.7"/>
    <property type="gene ID" value="ENSMUSG00000026255.16"/>
</dbReference>
<dbReference type="Ensembl" id="ENSMUST00000118687.8">
    <property type="protein sequence ID" value="ENSMUSP00000112980.2"/>
    <property type="gene ID" value="ENSMUSG00000026255.16"/>
</dbReference>
<dbReference type="GeneID" id="98363"/>
<dbReference type="KEGG" id="mmu:98363"/>
<dbReference type="UCSC" id="uc007bwo.1">
    <property type="organism name" value="mouse"/>
</dbReference>
<dbReference type="AGR" id="MGI:1921607"/>
<dbReference type="CTD" id="80303"/>
<dbReference type="MGI" id="MGI:1921607">
    <property type="gene designation" value="Efhd1"/>
</dbReference>
<dbReference type="VEuPathDB" id="HostDB:ENSMUSG00000026255"/>
<dbReference type="eggNOG" id="KOG0041">
    <property type="taxonomic scope" value="Eukaryota"/>
</dbReference>
<dbReference type="GeneTree" id="ENSGT00390000012058"/>
<dbReference type="HOGENOM" id="CLU_094429_0_0_1"/>
<dbReference type="InParanoid" id="Q9D4J1"/>
<dbReference type="OMA" id="EVKHTYR"/>
<dbReference type="OrthoDB" id="6572480at2759"/>
<dbReference type="PhylomeDB" id="Q9D4J1"/>
<dbReference type="TreeFam" id="TF320736"/>
<dbReference type="BioGRID-ORCS" id="98363">
    <property type="hits" value="3 hits in 77 CRISPR screens"/>
</dbReference>
<dbReference type="ChiTaRS" id="Efhd1">
    <property type="organism name" value="mouse"/>
</dbReference>
<dbReference type="PRO" id="PR:Q9D4J1"/>
<dbReference type="Proteomes" id="UP000000589">
    <property type="component" value="Chromosome 1"/>
</dbReference>
<dbReference type="RNAct" id="Q9D4J1">
    <property type="molecule type" value="protein"/>
</dbReference>
<dbReference type="Bgee" id="ENSMUSG00000026255">
    <property type="expression patterns" value="Expressed in seminiferous tubule of testis and 189 other cell types or tissues"/>
</dbReference>
<dbReference type="GO" id="GO:0005743">
    <property type="term" value="C:mitochondrial inner membrane"/>
    <property type="evidence" value="ECO:0000314"/>
    <property type="project" value="MGI"/>
</dbReference>
<dbReference type="GO" id="GO:0005739">
    <property type="term" value="C:mitochondrion"/>
    <property type="evidence" value="ECO:0007005"/>
    <property type="project" value="MGI"/>
</dbReference>
<dbReference type="GO" id="GO:0005509">
    <property type="term" value="F:calcium ion binding"/>
    <property type="evidence" value="ECO:0007669"/>
    <property type="project" value="InterPro"/>
</dbReference>
<dbReference type="GO" id="GO:0061891">
    <property type="term" value="F:calcium ion sensor activity"/>
    <property type="evidence" value="ECO:0000250"/>
    <property type="project" value="UniProtKB"/>
</dbReference>
<dbReference type="GO" id="GO:0031175">
    <property type="term" value="P:neuron projection development"/>
    <property type="evidence" value="ECO:0000315"/>
    <property type="project" value="MGI"/>
</dbReference>
<dbReference type="GO" id="GO:1900069">
    <property type="term" value="P:regulation of cellular hyperosmotic salinity response"/>
    <property type="evidence" value="ECO:0000250"/>
    <property type="project" value="UniProtKB"/>
</dbReference>
<dbReference type="CDD" id="cd00051">
    <property type="entry name" value="EFh"/>
    <property type="match status" value="1"/>
</dbReference>
<dbReference type="FunFam" id="1.10.238.10:FF:000112">
    <property type="entry name" value="EF-hand domain family, member D2"/>
    <property type="match status" value="1"/>
</dbReference>
<dbReference type="Gene3D" id="1.10.238.10">
    <property type="entry name" value="EF-hand"/>
    <property type="match status" value="1"/>
</dbReference>
<dbReference type="InterPro" id="IPR011992">
    <property type="entry name" value="EF-hand-dom_pair"/>
</dbReference>
<dbReference type="InterPro" id="IPR002048">
    <property type="entry name" value="EF_hand_dom"/>
</dbReference>
<dbReference type="InterPro" id="IPR040365">
    <property type="entry name" value="EFHD1/2"/>
</dbReference>
<dbReference type="PANTHER" id="PTHR13025">
    <property type="entry name" value="EF-HAND DOMAIN-CONTAINING PROTEIN D"/>
    <property type="match status" value="1"/>
</dbReference>
<dbReference type="PANTHER" id="PTHR13025:SF5">
    <property type="entry name" value="EF-HAND DOMAIN-CONTAINING PROTEIN D1"/>
    <property type="match status" value="1"/>
</dbReference>
<dbReference type="Pfam" id="PF13499">
    <property type="entry name" value="EF-hand_7"/>
    <property type="match status" value="1"/>
</dbReference>
<dbReference type="SMART" id="SM00054">
    <property type="entry name" value="EFh"/>
    <property type="match status" value="2"/>
</dbReference>
<dbReference type="SUPFAM" id="SSF47473">
    <property type="entry name" value="EF-hand"/>
    <property type="match status" value="1"/>
</dbReference>
<dbReference type="PROSITE" id="PS50222">
    <property type="entry name" value="EF_HAND_2"/>
    <property type="match status" value="2"/>
</dbReference>
<reference key="1">
    <citation type="journal article" date="2005" name="Science">
        <title>The transcriptional landscape of the mammalian genome.</title>
        <authorList>
            <person name="Carninci P."/>
            <person name="Kasukawa T."/>
            <person name="Katayama S."/>
            <person name="Gough J."/>
            <person name="Frith M.C."/>
            <person name="Maeda N."/>
            <person name="Oyama R."/>
            <person name="Ravasi T."/>
            <person name="Lenhard B."/>
            <person name="Wells C."/>
            <person name="Kodzius R."/>
            <person name="Shimokawa K."/>
            <person name="Bajic V.B."/>
            <person name="Brenner S.E."/>
            <person name="Batalov S."/>
            <person name="Forrest A.R."/>
            <person name="Zavolan M."/>
            <person name="Davis M.J."/>
            <person name="Wilming L.G."/>
            <person name="Aidinis V."/>
            <person name="Allen J.E."/>
            <person name="Ambesi-Impiombato A."/>
            <person name="Apweiler R."/>
            <person name="Aturaliya R.N."/>
            <person name="Bailey T.L."/>
            <person name="Bansal M."/>
            <person name="Baxter L."/>
            <person name="Beisel K.W."/>
            <person name="Bersano T."/>
            <person name="Bono H."/>
            <person name="Chalk A.M."/>
            <person name="Chiu K.P."/>
            <person name="Choudhary V."/>
            <person name="Christoffels A."/>
            <person name="Clutterbuck D.R."/>
            <person name="Crowe M.L."/>
            <person name="Dalla E."/>
            <person name="Dalrymple B.P."/>
            <person name="de Bono B."/>
            <person name="Della Gatta G."/>
            <person name="di Bernardo D."/>
            <person name="Down T."/>
            <person name="Engstrom P."/>
            <person name="Fagiolini M."/>
            <person name="Faulkner G."/>
            <person name="Fletcher C.F."/>
            <person name="Fukushima T."/>
            <person name="Furuno M."/>
            <person name="Futaki S."/>
            <person name="Gariboldi M."/>
            <person name="Georgii-Hemming P."/>
            <person name="Gingeras T.R."/>
            <person name="Gojobori T."/>
            <person name="Green R.E."/>
            <person name="Gustincich S."/>
            <person name="Harbers M."/>
            <person name="Hayashi Y."/>
            <person name="Hensch T.K."/>
            <person name="Hirokawa N."/>
            <person name="Hill D."/>
            <person name="Huminiecki L."/>
            <person name="Iacono M."/>
            <person name="Ikeo K."/>
            <person name="Iwama A."/>
            <person name="Ishikawa T."/>
            <person name="Jakt M."/>
            <person name="Kanapin A."/>
            <person name="Katoh M."/>
            <person name="Kawasawa Y."/>
            <person name="Kelso J."/>
            <person name="Kitamura H."/>
            <person name="Kitano H."/>
            <person name="Kollias G."/>
            <person name="Krishnan S.P."/>
            <person name="Kruger A."/>
            <person name="Kummerfeld S.K."/>
            <person name="Kurochkin I.V."/>
            <person name="Lareau L.F."/>
            <person name="Lazarevic D."/>
            <person name="Lipovich L."/>
            <person name="Liu J."/>
            <person name="Liuni S."/>
            <person name="McWilliam S."/>
            <person name="Madan Babu M."/>
            <person name="Madera M."/>
            <person name="Marchionni L."/>
            <person name="Matsuda H."/>
            <person name="Matsuzawa S."/>
            <person name="Miki H."/>
            <person name="Mignone F."/>
            <person name="Miyake S."/>
            <person name="Morris K."/>
            <person name="Mottagui-Tabar S."/>
            <person name="Mulder N."/>
            <person name="Nakano N."/>
            <person name="Nakauchi H."/>
            <person name="Ng P."/>
            <person name="Nilsson R."/>
            <person name="Nishiguchi S."/>
            <person name="Nishikawa S."/>
            <person name="Nori F."/>
            <person name="Ohara O."/>
            <person name="Okazaki Y."/>
            <person name="Orlando V."/>
            <person name="Pang K.C."/>
            <person name="Pavan W.J."/>
            <person name="Pavesi G."/>
            <person name="Pesole G."/>
            <person name="Petrovsky N."/>
            <person name="Piazza S."/>
            <person name="Reed J."/>
            <person name="Reid J.F."/>
            <person name="Ring B.Z."/>
            <person name="Ringwald M."/>
            <person name="Rost B."/>
            <person name="Ruan Y."/>
            <person name="Salzberg S.L."/>
            <person name="Sandelin A."/>
            <person name="Schneider C."/>
            <person name="Schoenbach C."/>
            <person name="Sekiguchi K."/>
            <person name="Semple C.A."/>
            <person name="Seno S."/>
            <person name="Sessa L."/>
            <person name="Sheng Y."/>
            <person name="Shibata Y."/>
            <person name="Shimada H."/>
            <person name="Shimada K."/>
            <person name="Silva D."/>
            <person name="Sinclair B."/>
            <person name="Sperling S."/>
            <person name="Stupka E."/>
            <person name="Sugiura K."/>
            <person name="Sultana R."/>
            <person name="Takenaka Y."/>
            <person name="Taki K."/>
            <person name="Tammoja K."/>
            <person name="Tan S.L."/>
            <person name="Tang S."/>
            <person name="Taylor M.S."/>
            <person name="Tegner J."/>
            <person name="Teichmann S.A."/>
            <person name="Ueda H.R."/>
            <person name="van Nimwegen E."/>
            <person name="Verardo R."/>
            <person name="Wei C.L."/>
            <person name="Yagi K."/>
            <person name="Yamanishi H."/>
            <person name="Zabarovsky E."/>
            <person name="Zhu S."/>
            <person name="Zimmer A."/>
            <person name="Hide W."/>
            <person name="Bult C."/>
            <person name="Grimmond S.M."/>
            <person name="Teasdale R.D."/>
            <person name="Liu E.T."/>
            <person name="Brusic V."/>
            <person name="Quackenbush J."/>
            <person name="Wahlestedt C."/>
            <person name="Mattick J.S."/>
            <person name="Hume D.A."/>
            <person name="Kai C."/>
            <person name="Sasaki D."/>
            <person name="Tomaru Y."/>
            <person name="Fukuda S."/>
            <person name="Kanamori-Katayama M."/>
            <person name="Suzuki M."/>
            <person name="Aoki J."/>
            <person name="Arakawa T."/>
            <person name="Iida J."/>
            <person name="Imamura K."/>
            <person name="Itoh M."/>
            <person name="Kato T."/>
            <person name="Kawaji H."/>
            <person name="Kawagashira N."/>
            <person name="Kawashima T."/>
            <person name="Kojima M."/>
            <person name="Kondo S."/>
            <person name="Konno H."/>
            <person name="Nakano K."/>
            <person name="Ninomiya N."/>
            <person name="Nishio T."/>
            <person name="Okada M."/>
            <person name="Plessy C."/>
            <person name="Shibata K."/>
            <person name="Shiraki T."/>
            <person name="Suzuki S."/>
            <person name="Tagami M."/>
            <person name="Waki K."/>
            <person name="Watahiki A."/>
            <person name="Okamura-Oho Y."/>
            <person name="Suzuki H."/>
            <person name="Kawai J."/>
            <person name="Hayashizaki Y."/>
        </authorList>
    </citation>
    <scope>NUCLEOTIDE SEQUENCE [LARGE SCALE MRNA]</scope>
    <source>
        <strain>C57BL/6J</strain>
        <strain>NOD</strain>
        <tissue>Corpora quadrigemina</tissue>
        <tissue>Spleen</tissue>
        <tissue>Testis</tissue>
    </source>
</reference>
<reference key="2">
    <citation type="journal article" date="2004" name="Genome Res.">
        <title>The status, quality, and expansion of the NIH full-length cDNA project: the Mammalian Gene Collection (MGC).</title>
        <authorList>
            <consortium name="The MGC Project Team"/>
        </authorList>
    </citation>
    <scope>NUCLEOTIDE SEQUENCE [LARGE SCALE MRNA]</scope>
    <source>
        <strain>FVB/N</strain>
        <tissue>Eye</tissue>
        <tissue>Mammary gland</tissue>
    </source>
</reference>
<reference key="3">
    <citation type="journal article" date="2002" name="Biochem. Biophys. Res. Commun.">
        <title>Novel genes cloned from a neuronal cell line newly established from a cerebellum of an adult p53(-/-) mouse.</title>
        <authorList>
            <person name="Tominaga M."/>
            <person name="Tomooka Y."/>
        </authorList>
    </citation>
    <scope>TISSUE SPECIFICITY</scope>
    <scope>DEVELOPMENTAL STAGE</scope>
</reference>
<reference key="4">
    <citation type="journal article" date="2006" name="J. Neurochem.">
        <title>Molecular characterization of mitocalcin, a novel mitochondrial Ca2+-binding protein with EF-hand and coiled-coil domains.</title>
        <authorList>
            <person name="Tominaga M."/>
            <person name="Kurihara H."/>
            <person name="Honda S."/>
            <person name="Amakawa G."/>
            <person name="Sakai T."/>
            <person name="Tomooka Y."/>
        </authorList>
    </citation>
    <scope>FUNCTION</scope>
    <scope>SUBCELLULAR LOCATION</scope>
</reference>
<reference key="5">
    <citation type="journal article" date="2010" name="Cell">
        <title>A tissue-specific atlas of mouse protein phosphorylation and expression.</title>
        <authorList>
            <person name="Huttlin E.L."/>
            <person name="Jedrychowski M.P."/>
            <person name="Elias J.E."/>
            <person name="Goswami T."/>
            <person name="Rad R."/>
            <person name="Beausoleil S.A."/>
            <person name="Villen J."/>
            <person name="Haas W."/>
            <person name="Sowa M.E."/>
            <person name="Gygi S.P."/>
        </authorList>
    </citation>
    <scope>IDENTIFICATION BY MASS SPECTROMETRY [LARGE SCALE ANALYSIS]</scope>
    <source>
        <tissue>Testis</tissue>
    </source>
</reference>
<feature type="chain" id="PRO_0000073644" description="EF-hand domain-containing protein D1">
    <location>
        <begin position="1"/>
        <end position="240"/>
    </location>
</feature>
<feature type="domain" description="EF-hand 1" evidence="2">
    <location>
        <begin position="91"/>
        <end position="126"/>
    </location>
</feature>
<feature type="domain" description="EF-hand 2" evidence="2">
    <location>
        <begin position="127"/>
        <end position="162"/>
    </location>
</feature>
<feature type="region of interest" description="Disordered" evidence="3">
    <location>
        <begin position="17"/>
        <end position="54"/>
    </location>
</feature>
<feature type="binding site" evidence="7">
    <location>
        <position position="104"/>
    </location>
    <ligand>
        <name>Ca(2+)</name>
        <dbReference type="ChEBI" id="CHEBI:29108"/>
        <label>1</label>
    </ligand>
</feature>
<feature type="binding site" evidence="7">
    <location>
        <position position="108"/>
    </location>
    <ligand>
        <name>Ca(2+)</name>
        <dbReference type="ChEBI" id="CHEBI:29108"/>
        <label>1</label>
    </ligand>
</feature>
<feature type="binding site" evidence="7">
    <location>
        <position position="115"/>
    </location>
    <ligand>
        <name>Ca(2+)</name>
        <dbReference type="ChEBI" id="CHEBI:29108"/>
        <label>1</label>
    </ligand>
</feature>
<feature type="binding site" evidence="7">
    <location>
        <position position="140"/>
    </location>
    <ligand>
        <name>Ca(2+)</name>
        <dbReference type="ChEBI" id="CHEBI:29108"/>
        <label>2</label>
    </ligand>
</feature>
<feature type="binding site" evidence="7">
    <location>
        <position position="142"/>
    </location>
    <ligand>
        <name>Ca(2+)</name>
        <dbReference type="ChEBI" id="CHEBI:29108"/>
        <label>2</label>
    </ligand>
</feature>
<feature type="binding site" evidence="7">
    <location>
        <position position="144"/>
    </location>
    <ligand>
        <name>Ca(2+)</name>
        <dbReference type="ChEBI" id="CHEBI:29108"/>
        <label>2</label>
    </ligand>
</feature>
<feature type="binding site" evidence="7">
    <location>
        <position position="146"/>
    </location>
    <ligand>
        <name>Ca(2+)</name>
        <dbReference type="ChEBI" id="CHEBI:29108"/>
        <label>2</label>
    </ligand>
</feature>
<feature type="binding site" evidence="7">
    <location>
        <position position="151"/>
    </location>
    <ligand>
        <name>Ca(2+)</name>
        <dbReference type="ChEBI" id="CHEBI:29108"/>
        <label>2</label>
    </ligand>
</feature>
<feature type="helix" evidence="8">
    <location>
        <begin position="81"/>
        <end position="84"/>
    </location>
</feature>
<feature type="helix" evidence="8">
    <location>
        <begin position="90"/>
        <end position="103"/>
    </location>
</feature>
<feature type="strand" evidence="8">
    <location>
        <begin position="108"/>
        <end position="111"/>
    </location>
</feature>
<feature type="helix" evidence="8">
    <location>
        <begin position="113"/>
        <end position="123"/>
    </location>
</feature>
<feature type="helix" evidence="8">
    <location>
        <begin position="129"/>
        <end position="139"/>
    </location>
</feature>
<feature type="strand" evidence="8">
    <location>
        <begin position="144"/>
        <end position="148"/>
    </location>
</feature>
<feature type="helix" evidence="8">
    <location>
        <begin position="149"/>
        <end position="160"/>
    </location>
</feature>
<feature type="helix" evidence="8">
    <location>
        <begin position="169"/>
        <end position="176"/>
    </location>
</feature>
<proteinExistence type="evidence at protein level"/>
<evidence type="ECO:0000250" key="1">
    <source>
        <dbReference type="UniProtKB" id="Q9BUP0"/>
    </source>
</evidence>
<evidence type="ECO:0000255" key="2">
    <source>
        <dbReference type="PROSITE-ProRule" id="PRU00448"/>
    </source>
</evidence>
<evidence type="ECO:0000256" key="3">
    <source>
        <dbReference type="SAM" id="MobiDB-lite"/>
    </source>
</evidence>
<evidence type="ECO:0000269" key="4">
    <source>
    </source>
</evidence>
<evidence type="ECO:0000269" key="5">
    <source>
    </source>
</evidence>
<evidence type="ECO:0000303" key="6">
    <source>
    </source>
</evidence>
<evidence type="ECO:0000305" key="7"/>
<evidence type="ECO:0007829" key="8">
    <source>
        <dbReference type="PDB" id="7YGW"/>
    </source>
</evidence>
<name>EFHD1_MOUSE</name>